<protein>
    <recommendedName>
        <fullName>3-hydroxyisobutyryl-CoA hydrolase-like protein 1, mitochondrial</fullName>
        <ecNumber>3.1.2.-</ecNumber>
    </recommendedName>
</protein>
<proteinExistence type="evidence at protein level"/>
<comment type="subcellular location">
    <subcellularLocation>
        <location evidence="3">Mitochondrion</location>
    </subcellularLocation>
</comment>
<comment type="alternative products">
    <event type="alternative splicing"/>
    <isoform>
        <id>Q5XF59-1</id>
        <name>1</name>
        <sequence type="displayed"/>
    </isoform>
    <isoform>
        <id>Q5XF59-2</id>
        <name>2</name>
        <sequence type="described" ref="VSP_038865 VSP_038866"/>
    </isoform>
</comment>
<comment type="similarity">
    <text evidence="2">Belongs to the enoyl-CoA hydratase/isomerase family.</text>
</comment>
<comment type="sequence caution" evidence="2">
    <conflict type="erroneous gene model prediction">
        <sequence resource="EMBL-CDS" id="CAB81837"/>
    </conflict>
</comment>
<sequence>MHNAKGLLGRIVRDKLWRFGYRRSLCSLKLTSEDLDYQVLVEGSGCSRTAILNRPPALNALTTHMGYRLQKLYKNWEEDPNIGFVMMKGSGRAFCAGGDIVSLYHLRTRGSPDAIREFFSSLYSFIYLLGTYLKPHVAILNGVTMGGGTGVSIPGTFRVATDRTIFATPETIIGFHPDAGASFNLSHLPGRLGEYLGLTGLKLSGAEMLACGLATHYIRSEEVPVMEEQLKKLLTDDPSVVESCLEKCAEVAHPEKTGVIRRIDLLEKCFSHDTVEEIIDSLEIEASRRKDTWCITTLRRLKESSPLSLKVALRSIREGRLQTLDQCLIREYRMSLQGLIGPMSGNFCEGVRARLIDKDEAPKWDPPSLEKVSEDMVDDYFCALTPTEPDLDLPVKLRESI</sequence>
<gene>
    <name type="ordered locus">At3g60510</name>
    <name type="ORF">T8B10.170</name>
</gene>
<accession>Q5XF59</accession>
<accession>Q2V3M8</accession>
<accession>Q9M208</accession>
<keyword id="KW-0025">Alternative splicing</keyword>
<keyword id="KW-0378">Hydrolase</keyword>
<keyword id="KW-0496">Mitochondrion</keyword>
<keyword id="KW-1185">Reference proteome</keyword>
<keyword id="KW-0809">Transit peptide</keyword>
<organism>
    <name type="scientific">Arabidopsis thaliana</name>
    <name type="common">Mouse-ear cress</name>
    <dbReference type="NCBI Taxonomy" id="3702"/>
    <lineage>
        <taxon>Eukaryota</taxon>
        <taxon>Viridiplantae</taxon>
        <taxon>Streptophyta</taxon>
        <taxon>Embryophyta</taxon>
        <taxon>Tracheophyta</taxon>
        <taxon>Spermatophyta</taxon>
        <taxon>Magnoliopsida</taxon>
        <taxon>eudicotyledons</taxon>
        <taxon>Gunneridae</taxon>
        <taxon>Pentapetalae</taxon>
        <taxon>rosids</taxon>
        <taxon>malvids</taxon>
        <taxon>Brassicales</taxon>
        <taxon>Brassicaceae</taxon>
        <taxon>Camelineae</taxon>
        <taxon>Arabidopsis</taxon>
    </lineage>
</organism>
<evidence type="ECO:0000269" key="1">
    <source>
    </source>
</evidence>
<evidence type="ECO:0000305" key="2"/>
<evidence type="ECO:0000305" key="3">
    <source>
    </source>
</evidence>
<reference key="1">
    <citation type="journal article" date="2000" name="Nature">
        <title>Sequence and analysis of chromosome 3 of the plant Arabidopsis thaliana.</title>
        <authorList>
            <person name="Salanoubat M."/>
            <person name="Lemcke K."/>
            <person name="Rieger M."/>
            <person name="Ansorge W."/>
            <person name="Unseld M."/>
            <person name="Fartmann B."/>
            <person name="Valle G."/>
            <person name="Bloecker H."/>
            <person name="Perez-Alonso M."/>
            <person name="Obermaier B."/>
            <person name="Delseny M."/>
            <person name="Boutry M."/>
            <person name="Grivell L.A."/>
            <person name="Mache R."/>
            <person name="Puigdomenech P."/>
            <person name="De Simone V."/>
            <person name="Choisne N."/>
            <person name="Artiguenave F."/>
            <person name="Robert C."/>
            <person name="Brottier P."/>
            <person name="Wincker P."/>
            <person name="Cattolico L."/>
            <person name="Weissenbach J."/>
            <person name="Saurin W."/>
            <person name="Quetier F."/>
            <person name="Schaefer M."/>
            <person name="Mueller-Auer S."/>
            <person name="Gabel C."/>
            <person name="Fuchs M."/>
            <person name="Benes V."/>
            <person name="Wurmbach E."/>
            <person name="Drzonek H."/>
            <person name="Erfle H."/>
            <person name="Jordan N."/>
            <person name="Bangert S."/>
            <person name="Wiedelmann R."/>
            <person name="Kranz H."/>
            <person name="Voss H."/>
            <person name="Holland R."/>
            <person name="Brandt P."/>
            <person name="Nyakatura G."/>
            <person name="Vezzi A."/>
            <person name="D'Angelo M."/>
            <person name="Pallavicini A."/>
            <person name="Toppo S."/>
            <person name="Simionati B."/>
            <person name="Conrad A."/>
            <person name="Hornischer K."/>
            <person name="Kauer G."/>
            <person name="Loehnert T.-H."/>
            <person name="Nordsiek G."/>
            <person name="Reichelt J."/>
            <person name="Scharfe M."/>
            <person name="Schoen O."/>
            <person name="Bargues M."/>
            <person name="Terol J."/>
            <person name="Climent J."/>
            <person name="Navarro P."/>
            <person name="Collado C."/>
            <person name="Perez-Perez A."/>
            <person name="Ottenwaelder B."/>
            <person name="Duchemin D."/>
            <person name="Cooke R."/>
            <person name="Laudie M."/>
            <person name="Berger-Llauro C."/>
            <person name="Purnelle B."/>
            <person name="Masuy D."/>
            <person name="de Haan M."/>
            <person name="Maarse A.C."/>
            <person name="Alcaraz J.-P."/>
            <person name="Cottet A."/>
            <person name="Casacuberta E."/>
            <person name="Monfort A."/>
            <person name="Argiriou A."/>
            <person name="Flores M."/>
            <person name="Liguori R."/>
            <person name="Vitale D."/>
            <person name="Mannhaupt G."/>
            <person name="Haase D."/>
            <person name="Schoof H."/>
            <person name="Rudd S."/>
            <person name="Zaccaria P."/>
            <person name="Mewes H.-W."/>
            <person name="Mayer K.F.X."/>
            <person name="Kaul S."/>
            <person name="Town C.D."/>
            <person name="Koo H.L."/>
            <person name="Tallon L.J."/>
            <person name="Jenkins J."/>
            <person name="Rooney T."/>
            <person name="Rizzo M."/>
            <person name="Walts A."/>
            <person name="Utterback T."/>
            <person name="Fujii C.Y."/>
            <person name="Shea T.P."/>
            <person name="Creasy T.H."/>
            <person name="Haas B."/>
            <person name="Maiti R."/>
            <person name="Wu D."/>
            <person name="Peterson J."/>
            <person name="Van Aken S."/>
            <person name="Pai G."/>
            <person name="Militscher J."/>
            <person name="Sellers P."/>
            <person name="Gill J.E."/>
            <person name="Feldblyum T.V."/>
            <person name="Preuss D."/>
            <person name="Lin X."/>
            <person name="Nierman W.C."/>
            <person name="Salzberg S.L."/>
            <person name="White O."/>
            <person name="Venter J.C."/>
            <person name="Fraser C.M."/>
            <person name="Kaneko T."/>
            <person name="Nakamura Y."/>
            <person name="Sato S."/>
            <person name="Kato T."/>
            <person name="Asamizu E."/>
            <person name="Sasamoto S."/>
            <person name="Kimura T."/>
            <person name="Idesawa K."/>
            <person name="Kawashima K."/>
            <person name="Kishida Y."/>
            <person name="Kiyokawa C."/>
            <person name="Kohara M."/>
            <person name="Matsumoto M."/>
            <person name="Matsuno A."/>
            <person name="Muraki A."/>
            <person name="Nakayama S."/>
            <person name="Nakazaki N."/>
            <person name="Shinpo S."/>
            <person name="Takeuchi C."/>
            <person name="Wada T."/>
            <person name="Watanabe A."/>
            <person name="Yamada M."/>
            <person name="Yasuda M."/>
            <person name="Tabata S."/>
        </authorList>
    </citation>
    <scope>NUCLEOTIDE SEQUENCE [LARGE SCALE GENOMIC DNA]</scope>
    <source>
        <strain>cv. Columbia</strain>
    </source>
</reference>
<reference key="2">
    <citation type="journal article" date="2017" name="Plant J.">
        <title>Araport11: a complete reannotation of the Arabidopsis thaliana reference genome.</title>
        <authorList>
            <person name="Cheng C.Y."/>
            <person name="Krishnakumar V."/>
            <person name="Chan A.P."/>
            <person name="Thibaud-Nissen F."/>
            <person name="Schobel S."/>
            <person name="Town C.D."/>
        </authorList>
    </citation>
    <scope>GENOME REANNOTATION</scope>
    <source>
        <strain>cv. Columbia</strain>
    </source>
</reference>
<reference key="3">
    <citation type="submission" date="2004-11" db="EMBL/GenBank/DDBJ databases">
        <title>Arabidopsis ORF clones.</title>
        <authorList>
            <person name="Shinn P."/>
            <person name="Chen H."/>
            <person name="Cheuk R."/>
            <person name="Kim C.J."/>
            <person name="Ecker J.R."/>
        </authorList>
    </citation>
    <scope>NUCLEOTIDE SEQUENCE [LARGE SCALE MRNA] (ISOFORM 1)</scope>
    <source>
        <strain>cv. Columbia</strain>
    </source>
</reference>
<reference key="4">
    <citation type="submission" date="2006-07" db="EMBL/GenBank/DDBJ databases">
        <title>Large-scale analysis of RIKEN Arabidopsis full-length (RAFL) cDNAs.</title>
        <authorList>
            <person name="Totoki Y."/>
            <person name="Seki M."/>
            <person name="Ishida J."/>
            <person name="Nakajima M."/>
            <person name="Enju A."/>
            <person name="Kamiya A."/>
            <person name="Narusaka M."/>
            <person name="Shin-i T."/>
            <person name="Nakagawa M."/>
            <person name="Sakamoto N."/>
            <person name="Oishi K."/>
            <person name="Kohara Y."/>
            <person name="Kobayashi M."/>
            <person name="Toyoda A."/>
            <person name="Sakaki Y."/>
            <person name="Sakurai T."/>
            <person name="Iida K."/>
            <person name="Akiyama K."/>
            <person name="Satou M."/>
            <person name="Toyoda T."/>
            <person name="Konagaya A."/>
            <person name="Carninci P."/>
            <person name="Kawai J."/>
            <person name="Hayashizaki Y."/>
            <person name="Shinozaki K."/>
        </authorList>
    </citation>
    <scope>NUCLEOTIDE SEQUENCE [LARGE SCALE MRNA] (ISOFORM 1)</scope>
    <source>
        <strain>cv. Columbia</strain>
    </source>
</reference>
<reference key="5">
    <citation type="journal article" date="2001" name="J. Biol. Chem.">
        <title>chy1, an Arabidopsis mutant with impaired beta-oxidation, is defective in a peroxisomal beta-hydroxyisobutyryl-CoA hydrolase.</title>
        <authorList>
            <person name="Zolman B.K."/>
            <person name="Monroe-Augustus M."/>
            <person name="Thompson B."/>
            <person name="Hawes J.W."/>
            <person name="Krukenberg K.A."/>
            <person name="Matsuda S.P."/>
            <person name="Bartel B."/>
        </authorList>
    </citation>
    <scope>GENE FAMILY</scope>
</reference>
<reference key="6">
    <citation type="journal article" date="2015" name="J. Exp. Bot.">
        <title>Identification of cleavage sites and substrate proteins for two mitochondrial intermediate peptidases in Arabidopsis thaliana.</title>
        <authorList>
            <person name="Carrie C."/>
            <person name="Venne A.S."/>
            <person name="Zahedi R.P."/>
            <person name="Soll J."/>
        </authorList>
    </citation>
    <scope>IDENTIFICATION BY MASS SPECTROMETRY</scope>
    <scope>CLEAVAGE OF TRANSIT PEPTIDE AFTER CYS-26</scope>
</reference>
<dbReference type="EC" id="3.1.2.-"/>
<dbReference type="EMBL" id="AL138646">
    <property type="protein sequence ID" value="CAB81837.1"/>
    <property type="status" value="ALT_SEQ"/>
    <property type="molecule type" value="Genomic_DNA"/>
</dbReference>
<dbReference type="EMBL" id="CP002686">
    <property type="protein sequence ID" value="AEE80071.1"/>
    <property type="molecule type" value="Genomic_DNA"/>
</dbReference>
<dbReference type="EMBL" id="CP002686">
    <property type="protein sequence ID" value="AEE80072.1"/>
    <property type="molecule type" value="Genomic_DNA"/>
</dbReference>
<dbReference type="EMBL" id="BT015757">
    <property type="protein sequence ID" value="AAU90047.1"/>
    <property type="molecule type" value="mRNA"/>
</dbReference>
<dbReference type="EMBL" id="BT020182">
    <property type="protein sequence ID" value="AAV43784.1"/>
    <property type="molecule type" value="mRNA"/>
</dbReference>
<dbReference type="EMBL" id="AK229190">
    <property type="protein sequence ID" value="BAF01060.1"/>
    <property type="molecule type" value="mRNA"/>
</dbReference>
<dbReference type="PIR" id="T47862">
    <property type="entry name" value="T47862"/>
</dbReference>
<dbReference type="RefSeq" id="NP_001030902.1">
    <molecule id="Q5XF59-2"/>
    <property type="nucleotide sequence ID" value="NM_001035825.2"/>
</dbReference>
<dbReference type="RefSeq" id="NP_191610.3">
    <molecule id="Q5XF59-1"/>
    <property type="nucleotide sequence ID" value="NM_115915.5"/>
</dbReference>
<dbReference type="SMR" id="Q5XF59"/>
<dbReference type="FunCoup" id="Q5XF59">
    <property type="interactions" value="3059"/>
</dbReference>
<dbReference type="STRING" id="3702.Q5XF59"/>
<dbReference type="PaxDb" id="3702-AT3G60510.3"/>
<dbReference type="ProteomicsDB" id="230206">
    <molecule id="Q5XF59-1"/>
</dbReference>
<dbReference type="EnsemblPlants" id="AT3G60510.1">
    <molecule id="Q5XF59-1"/>
    <property type="protein sequence ID" value="AT3G60510.1"/>
    <property type="gene ID" value="AT3G60510"/>
</dbReference>
<dbReference type="EnsemblPlants" id="AT3G60510.2">
    <molecule id="Q5XF59-2"/>
    <property type="protein sequence ID" value="AT3G60510.2"/>
    <property type="gene ID" value="AT3G60510"/>
</dbReference>
<dbReference type="GeneID" id="825222"/>
<dbReference type="Gramene" id="AT3G60510.1">
    <molecule id="Q5XF59-1"/>
    <property type="protein sequence ID" value="AT3G60510.1"/>
    <property type="gene ID" value="AT3G60510"/>
</dbReference>
<dbReference type="Gramene" id="AT3G60510.2">
    <molecule id="Q5XF59-2"/>
    <property type="protein sequence ID" value="AT3G60510.2"/>
    <property type="gene ID" value="AT3G60510"/>
</dbReference>
<dbReference type="KEGG" id="ath:AT3G60510"/>
<dbReference type="Araport" id="AT3G60510"/>
<dbReference type="TAIR" id="AT3G60510"/>
<dbReference type="eggNOG" id="KOG1684">
    <property type="taxonomic scope" value="Eukaryota"/>
</dbReference>
<dbReference type="HOGENOM" id="CLU_009834_22_1_1"/>
<dbReference type="InParanoid" id="Q5XF59"/>
<dbReference type="OMA" id="TSIVHRG"/>
<dbReference type="OrthoDB" id="16820at2759"/>
<dbReference type="PhylomeDB" id="Q5XF59"/>
<dbReference type="BioCyc" id="ARA:AT3G60510-MONOMER"/>
<dbReference type="PRO" id="PR:Q5XF59"/>
<dbReference type="Proteomes" id="UP000006548">
    <property type="component" value="Chromosome 3"/>
</dbReference>
<dbReference type="ExpressionAtlas" id="Q5XF59">
    <property type="expression patterns" value="baseline and differential"/>
</dbReference>
<dbReference type="GO" id="GO:0005739">
    <property type="term" value="C:mitochondrion"/>
    <property type="evidence" value="ECO:0007669"/>
    <property type="project" value="UniProtKB-SubCell"/>
</dbReference>
<dbReference type="GO" id="GO:0003860">
    <property type="term" value="F:3-hydroxyisobutyryl-CoA hydrolase activity"/>
    <property type="evidence" value="ECO:0007669"/>
    <property type="project" value="InterPro"/>
</dbReference>
<dbReference type="CDD" id="cd06558">
    <property type="entry name" value="crotonase-like"/>
    <property type="match status" value="1"/>
</dbReference>
<dbReference type="FunFam" id="3.90.226.10:FF:000027">
    <property type="entry name" value="Probable 3-hydroxyisobutyryl-CoA hydrolase 2"/>
    <property type="match status" value="1"/>
</dbReference>
<dbReference type="Gene3D" id="3.90.226.10">
    <property type="entry name" value="2-enoyl-CoA Hydratase, Chain A, domain 1"/>
    <property type="match status" value="1"/>
</dbReference>
<dbReference type="InterPro" id="IPR029045">
    <property type="entry name" value="ClpP/crotonase-like_dom_sf"/>
</dbReference>
<dbReference type="InterPro" id="IPR045004">
    <property type="entry name" value="ECH_dom"/>
</dbReference>
<dbReference type="InterPro" id="IPR032259">
    <property type="entry name" value="HIBYL-CoA-H"/>
</dbReference>
<dbReference type="NCBIfam" id="NF004127">
    <property type="entry name" value="PRK05617.1"/>
    <property type="match status" value="1"/>
</dbReference>
<dbReference type="PANTHER" id="PTHR43176:SF4">
    <property type="entry name" value="3-HYDROXYISOBUTYRYL-COA HYDROLASE-LIKE PROTEIN 1, MITOCHONDRIAL"/>
    <property type="match status" value="1"/>
</dbReference>
<dbReference type="PANTHER" id="PTHR43176">
    <property type="entry name" value="3-HYDROXYISOBUTYRYL-COA HYDROLASE-RELATED"/>
    <property type="match status" value="1"/>
</dbReference>
<dbReference type="Pfam" id="PF16113">
    <property type="entry name" value="ECH_2"/>
    <property type="match status" value="1"/>
</dbReference>
<dbReference type="SUPFAM" id="SSF52096">
    <property type="entry name" value="ClpP/crotonase"/>
    <property type="match status" value="1"/>
</dbReference>
<name>HIBC4_ARATH</name>
<feature type="transit peptide" description="Mitochondrion" evidence="1">
    <location>
        <begin position="1"/>
        <end position="26"/>
    </location>
</feature>
<feature type="chain" id="PRO_0000392980" description="3-hydroxyisobutyryl-CoA hydrolase-like protein 1, mitochondrial">
    <location>
        <begin position="27"/>
        <end position="401"/>
    </location>
</feature>
<feature type="splice variant" id="VSP_038865" description="In isoform 2." evidence="2">
    <original>IR</original>
    <variation>LL</variation>
    <location>
        <begin position="316"/>
        <end position="317"/>
    </location>
</feature>
<feature type="splice variant" id="VSP_038866" description="In isoform 2." evidence="2">
    <location>
        <begin position="318"/>
        <end position="401"/>
    </location>
</feature>